<proteinExistence type="evidence at protein level"/>
<gene>
    <name evidence="5" type="primary">mapk15</name>
</gene>
<reference key="1">
    <citation type="journal article" date="2016" name="Nature">
        <title>Genome evolution in the allotetraploid frog Xenopus laevis.</title>
        <authorList>
            <person name="Session A.M."/>
            <person name="Uno Y."/>
            <person name="Kwon T."/>
            <person name="Chapman J.A."/>
            <person name="Toyoda A."/>
            <person name="Takahashi S."/>
            <person name="Fukui A."/>
            <person name="Hikosaka A."/>
            <person name="Suzuki A."/>
            <person name="Kondo M."/>
            <person name="van Heeringen S.J."/>
            <person name="Quigley I."/>
            <person name="Heinz S."/>
            <person name="Ogino H."/>
            <person name="Ochi H."/>
            <person name="Hellsten U."/>
            <person name="Lyons J.B."/>
            <person name="Simakov O."/>
            <person name="Putnam N."/>
            <person name="Stites J."/>
            <person name="Kuroki Y."/>
            <person name="Tanaka T."/>
            <person name="Michiue T."/>
            <person name="Watanabe M."/>
            <person name="Bogdanovic O."/>
            <person name="Lister R."/>
            <person name="Georgiou G."/>
            <person name="Paranjpe S.S."/>
            <person name="van Kruijsbergen I."/>
            <person name="Shu S."/>
            <person name="Carlson J."/>
            <person name="Kinoshita T."/>
            <person name="Ohta Y."/>
            <person name="Mawaribuchi S."/>
            <person name="Jenkins J."/>
            <person name="Grimwood J."/>
            <person name="Schmutz J."/>
            <person name="Mitros T."/>
            <person name="Mozaffari S.V."/>
            <person name="Suzuki Y."/>
            <person name="Haramoto Y."/>
            <person name="Yamamoto T.S."/>
            <person name="Takagi C."/>
            <person name="Heald R."/>
            <person name="Miller K."/>
            <person name="Haudenschild C."/>
            <person name="Kitzman J."/>
            <person name="Nakayama T."/>
            <person name="Izutsu Y."/>
            <person name="Robert J."/>
            <person name="Fortriede J."/>
            <person name="Burns K."/>
            <person name="Lotay V."/>
            <person name="Karimi K."/>
            <person name="Yasuoka Y."/>
            <person name="Dichmann D.S."/>
            <person name="Flajnik M.F."/>
            <person name="Houston D.W."/>
            <person name="Shendure J."/>
            <person name="DuPasquier L."/>
            <person name="Vize P.D."/>
            <person name="Zorn A.M."/>
            <person name="Ito M."/>
            <person name="Marcotte E.M."/>
            <person name="Wallingford J.B."/>
            <person name="Ito Y."/>
            <person name="Asashima M."/>
            <person name="Ueno N."/>
            <person name="Matsuda Y."/>
            <person name="Veenstra G.J."/>
            <person name="Fujiyama A."/>
            <person name="Harland R.M."/>
            <person name="Taira M."/>
            <person name="Rokhsar D.S."/>
        </authorList>
    </citation>
    <scope>NUCLEOTIDE SEQUENCE [LARGE SCALE GENOMIC DNA]</scope>
    <source>
        <strain>J</strain>
    </source>
</reference>
<reference key="2">
    <citation type="submission" date="2005-05" db="EMBL/GenBank/DDBJ databases">
        <authorList>
            <consortium name="NIH - Xenopus Gene Collection (XGC) project"/>
        </authorList>
    </citation>
    <scope>NUCLEOTIDE SEQUENCE [LARGE SCALE MRNA]</scope>
    <source>
        <tissue>Testis</tissue>
    </source>
</reference>
<reference key="3">
    <citation type="journal article" date="2015" name="Nat. Commun.">
        <title>ERK7 regulates ciliogenesis by phosphorylating the actin regulator CapZIP in cooperation with Dishevelled.</title>
        <authorList>
            <person name="Miyatake K."/>
            <person name="Kusakabe M."/>
            <person name="Takahashi C."/>
            <person name="Nishida E."/>
        </authorList>
    </citation>
    <scope>DEVELOPMENTAL STAGE</scope>
    <scope>DISRUPTION PHENOTYPE</scope>
    <scope>FUNCTION</scope>
    <scope>SUBCELLULAR LOCATION</scope>
    <scope>INTERACTION WITH DVL2</scope>
</reference>
<protein>
    <recommendedName>
        <fullName evidence="1">Mitogen-activated protein kinase 15</fullName>
        <ecNumber>2.7.11.24</ecNumber>
    </recommendedName>
</protein>
<keyword id="KW-0067">ATP-binding</keyword>
<keyword id="KW-0965">Cell junction</keyword>
<keyword id="KW-0966">Cell projection</keyword>
<keyword id="KW-0963">Cytoplasm</keyword>
<keyword id="KW-0206">Cytoskeleton</keyword>
<keyword id="KW-0418">Kinase</keyword>
<keyword id="KW-0547">Nucleotide-binding</keyword>
<keyword id="KW-1185">Reference proteome</keyword>
<keyword id="KW-0723">Serine/threonine-protein kinase</keyword>
<keyword id="KW-0808">Transferase</keyword>
<sequence>MSGPEVEDHISQKYDIKKRLGKGAYGIVWKAIDRKSGEIVAVKKIFDAFRNRTDAQRTFREIMFLQEFGEHPNIIKLLNVIRAQNDKDIYLVFEHMETDLHAVIKKGNLLKDIHMRYILYQLLKATKFIHSGNVIHRDQKPSNILLDGDCLVKLCDFGLARSLYQIQEDVGNPALTEYVATRWYRAPEILLASNRYTKGVDMWSVGCILGEMLLGKPLFPGTSTINQIERIMSIIEPPTHEDIVSIKSEYGASVISRMSSKHKVPMAELFPASCPREALDLLSKLLVFNPGKRLTAEEALEHPYVSRFHSPAREPALDYDVILPVDDDIQLSVAEYRNKLYEMILERKMNIRRQKRESLKESVSSSANGAKDRQDTDTSKTPAPPAGTNPAPQPTSSTVPQRAAIAAPNQPPAQKDSTQQSPKIKAPSSNPITHSTTHGSTEDWRTSHNKKAGQQGAAGTTAQEVRKEVESRSRTAPIGRARSFSHSQQARAAATNSALIRKDAPPTGTVSVAAVSARLNQRTAPIQGRDPRSAPRFGRKMFQGKTNVESAGDPKATLHSYTQAYGTISKAALQNLPQQGGAFKGK</sequence>
<feature type="chain" id="PRO_0000444600" description="Mitogen-activated protein kinase 15">
    <location>
        <begin position="1"/>
        <end position="586"/>
    </location>
</feature>
<feature type="domain" description="Protein kinase" evidence="2">
    <location>
        <begin position="14"/>
        <end position="305"/>
    </location>
</feature>
<feature type="region of interest" description="Disordered" evidence="3">
    <location>
        <begin position="354"/>
        <end position="506"/>
    </location>
</feature>
<feature type="region of interest" description="Disordered" evidence="3">
    <location>
        <begin position="520"/>
        <end position="539"/>
    </location>
</feature>
<feature type="compositionally biased region" description="Pro residues" evidence="3">
    <location>
        <begin position="382"/>
        <end position="393"/>
    </location>
</feature>
<feature type="compositionally biased region" description="Low complexity" evidence="3">
    <location>
        <begin position="400"/>
        <end position="414"/>
    </location>
</feature>
<feature type="compositionally biased region" description="Polar residues" evidence="3">
    <location>
        <begin position="415"/>
        <end position="439"/>
    </location>
</feature>
<feature type="compositionally biased region" description="Low complexity" evidence="3">
    <location>
        <begin position="452"/>
        <end position="463"/>
    </location>
</feature>
<feature type="compositionally biased region" description="Basic and acidic residues" evidence="3">
    <location>
        <begin position="464"/>
        <end position="473"/>
    </location>
</feature>
<feature type="compositionally biased region" description="Polar residues" evidence="3">
    <location>
        <begin position="484"/>
        <end position="498"/>
    </location>
</feature>
<feature type="active site" description="Proton acceptor" evidence="2">
    <location>
        <position position="138"/>
    </location>
</feature>
<feature type="binding site" evidence="2">
    <location>
        <begin position="20"/>
        <end position="28"/>
    </location>
    <ligand>
        <name>ATP</name>
        <dbReference type="ChEBI" id="CHEBI:30616"/>
    </ligand>
</feature>
<feature type="binding site" evidence="2">
    <location>
        <position position="43"/>
    </location>
    <ligand>
        <name>ATP</name>
        <dbReference type="ChEBI" id="CHEBI:30616"/>
    </ligand>
</feature>
<accession>Q501Q9</accession>
<comment type="function">
    <text evidence="4">Atypical MAPK protein that regulates ciliogenesis by phosphorylating rcsd1 through its binding with dvl2.</text>
</comment>
<comment type="catalytic activity">
    <reaction>
        <text>L-seryl-[protein] + ATP = O-phospho-L-seryl-[protein] + ADP + H(+)</text>
        <dbReference type="Rhea" id="RHEA:17989"/>
        <dbReference type="Rhea" id="RHEA-COMP:9863"/>
        <dbReference type="Rhea" id="RHEA-COMP:11604"/>
        <dbReference type="ChEBI" id="CHEBI:15378"/>
        <dbReference type="ChEBI" id="CHEBI:29999"/>
        <dbReference type="ChEBI" id="CHEBI:30616"/>
        <dbReference type="ChEBI" id="CHEBI:83421"/>
        <dbReference type="ChEBI" id="CHEBI:456216"/>
        <dbReference type="EC" id="2.7.11.24"/>
    </reaction>
</comment>
<comment type="catalytic activity">
    <reaction>
        <text>L-threonyl-[protein] + ATP = O-phospho-L-threonyl-[protein] + ADP + H(+)</text>
        <dbReference type="Rhea" id="RHEA:46608"/>
        <dbReference type="Rhea" id="RHEA-COMP:11060"/>
        <dbReference type="Rhea" id="RHEA-COMP:11605"/>
        <dbReference type="ChEBI" id="CHEBI:15378"/>
        <dbReference type="ChEBI" id="CHEBI:30013"/>
        <dbReference type="ChEBI" id="CHEBI:30616"/>
        <dbReference type="ChEBI" id="CHEBI:61977"/>
        <dbReference type="ChEBI" id="CHEBI:456216"/>
        <dbReference type="EC" id="2.7.11.24"/>
    </reaction>
</comment>
<comment type="subunit">
    <text evidence="4">Interacts with dvl2.</text>
</comment>
<comment type="subcellular location">
    <subcellularLocation>
        <location evidence="4">Cytoplasm</location>
        <location evidence="4">Cytoskeleton</location>
        <location evidence="4">Cilium basal body</location>
    </subcellularLocation>
    <subcellularLocation>
        <location evidence="4">Cell projection</location>
        <location evidence="4">Cilium</location>
    </subcellularLocation>
    <subcellularLocation>
        <location evidence="4">Cell junction</location>
    </subcellularLocation>
</comment>
<comment type="developmental stage">
    <text evidence="4">Expressed in the hemisphere. Highly expressed in ciliated tissues. At stage 12 (late gastrula), detected in the dorsal involuting marginal zone. Expressed in the gastrocoel roof plate (GRP) at stage 16 (neurula stage;). At stage 25 (early tailbud stage) and stage 33/34 (late tailbud stage), expressed in the floor plate, cloaca and ear vesicle. At stage 33/34 (late tailbud stage), detected in nephrostomes. Expressed in the epidermis at stage 13 and thereafter. Specifically expressed in multiciliated cells (MCCs) on the epidermis.</text>
</comment>
<comment type="disruption phenotype">
    <text evidence="4">Morpholino knockdown results in reduced head structures, close-set eyes and dorsal curvature. and loss of fin. At higher dose Morpholino knockdown results in the inhibition of antero-posterior axis elongation and breakdown of the epidermis, which resulted in exposure of the inner tissues to the outer environment and causes a loss of epidermal cells such as small secretory cells.</text>
</comment>
<organism>
    <name type="scientific">Xenopus laevis</name>
    <name type="common">African clawed frog</name>
    <dbReference type="NCBI Taxonomy" id="8355"/>
    <lineage>
        <taxon>Eukaryota</taxon>
        <taxon>Metazoa</taxon>
        <taxon>Chordata</taxon>
        <taxon>Craniata</taxon>
        <taxon>Vertebrata</taxon>
        <taxon>Euteleostomi</taxon>
        <taxon>Amphibia</taxon>
        <taxon>Batrachia</taxon>
        <taxon>Anura</taxon>
        <taxon>Pipoidea</taxon>
        <taxon>Pipidae</taxon>
        <taxon>Xenopodinae</taxon>
        <taxon>Xenopus</taxon>
        <taxon>Xenopus</taxon>
    </lineage>
</organism>
<name>MK15_XENLA</name>
<evidence type="ECO:0000250" key="1">
    <source>
        <dbReference type="UniProtKB" id="Q8TD08"/>
    </source>
</evidence>
<evidence type="ECO:0000255" key="2">
    <source>
        <dbReference type="PROSITE-ProRule" id="PRU00159"/>
    </source>
</evidence>
<evidence type="ECO:0000256" key="3">
    <source>
        <dbReference type="SAM" id="MobiDB-lite"/>
    </source>
</evidence>
<evidence type="ECO:0000269" key="4">
    <source>
    </source>
</evidence>
<evidence type="ECO:0000312" key="5">
    <source>
        <dbReference type="Xenbase" id="XB-GENE-1010341"/>
    </source>
</evidence>
<dbReference type="EC" id="2.7.11.24"/>
<dbReference type="EMBL" id="CM004476">
    <property type="protein sequence ID" value="OCT77367.1"/>
    <property type="molecule type" value="Genomic_DNA"/>
</dbReference>
<dbReference type="EMBL" id="BC095915">
    <property type="protein sequence ID" value="AAH95915.1"/>
    <property type="molecule type" value="mRNA"/>
</dbReference>
<dbReference type="RefSeq" id="NP_001089435.1">
    <property type="nucleotide sequence ID" value="NM_001095966.1"/>
</dbReference>
<dbReference type="SMR" id="Q501Q9"/>
<dbReference type="STRING" id="8355.Q501Q9"/>
<dbReference type="PaxDb" id="8355-Q501Q9"/>
<dbReference type="DNASU" id="734485"/>
<dbReference type="GeneID" id="734485"/>
<dbReference type="KEGG" id="xla:734485"/>
<dbReference type="AGR" id="Xenbase:XB-GENE-1010341"/>
<dbReference type="CTD" id="734485"/>
<dbReference type="Xenbase" id="XB-GENE-1010341">
    <property type="gene designation" value="mapk15.L"/>
</dbReference>
<dbReference type="OMA" id="PDQEWTR"/>
<dbReference type="OrthoDB" id="192887at2759"/>
<dbReference type="Proteomes" id="UP000186698">
    <property type="component" value="Chromosome 6L"/>
</dbReference>
<dbReference type="Proteomes" id="UP000694892">
    <property type="component" value="Chromosome 6L"/>
</dbReference>
<dbReference type="Bgee" id="734485">
    <property type="expression patterns" value="Expressed in testis and 12 other cell types or tissues"/>
</dbReference>
<dbReference type="GO" id="GO:0005911">
    <property type="term" value="C:cell-cell junction"/>
    <property type="evidence" value="ECO:0000314"/>
    <property type="project" value="UniProtKB"/>
</dbReference>
<dbReference type="GO" id="GO:0036064">
    <property type="term" value="C:ciliary basal body"/>
    <property type="evidence" value="ECO:0000314"/>
    <property type="project" value="UniProtKB"/>
</dbReference>
<dbReference type="GO" id="GO:0035253">
    <property type="term" value="C:ciliary rootlet"/>
    <property type="evidence" value="ECO:0000314"/>
    <property type="project" value="UniProtKB"/>
</dbReference>
<dbReference type="GO" id="GO:0005929">
    <property type="term" value="C:cilium"/>
    <property type="evidence" value="ECO:0000314"/>
    <property type="project" value="UniProtKB"/>
</dbReference>
<dbReference type="GO" id="GO:0005737">
    <property type="term" value="C:cytoplasm"/>
    <property type="evidence" value="ECO:0000318"/>
    <property type="project" value="GO_Central"/>
</dbReference>
<dbReference type="GO" id="GO:0005634">
    <property type="term" value="C:nucleus"/>
    <property type="evidence" value="ECO:0000318"/>
    <property type="project" value="GO_Central"/>
</dbReference>
<dbReference type="GO" id="GO:0005524">
    <property type="term" value="F:ATP binding"/>
    <property type="evidence" value="ECO:0007669"/>
    <property type="project" value="UniProtKB-KW"/>
</dbReference>
<dbReference type="GO" id="GO:0004707">
    <property type="term" value="F:MAP kinase activity"/>
    <property type="evidence" value="ECO:0007669"/>
    <property type="project" value="UniProtKB-EC"/>
</dbReference>
<dbReference type="GO" id="GO:0106310">
    <property type="term" value="F:protein serine kinase activity"/>
    <property type="evidence" value="ECO:0007669"/>
    <property type="project" value="RHEA"/>
</dbReference>
<dbReference type="GO" id="GO:0004674">
    <property type="term" value="F:protein serine/threonine kinase activity"/>
    <property type="evidence" value="ECO:0000318"/>
    <property type="project" value="GO_Central"/>
</dbReference>
<dbReference type="GO" id="GO:0035556">
    <property type="term" value="P:intracellular signal transduction"/>
    <property type="evidence" value="ECO:0000318"/>
    <property type="project" value="GO_Central"/>
</dbReference>
<dbReference type="GO" id="GO:1902017">
    <property type="term" value="P:regulation of cilium assembly"/>
    <property type="evidence" value="ECO:0000315"/>
    <property type="project" value="UniProtKB"/>
</dbReference>
<dbReference type="CDD" id="cd07852">
    <property type="entry name" value="STKc_MAPK15-like"/>
    <property type="match status" value="1"/>
</dbReference>
<dbReference type="FunFam" id="1.10.510.10:FF:000238">
    <property type="entry name" value="Mitogen-activated protein kinase"/>
    <property type="match status" value="1"/>
</dbReference>
<dbReference type="FunFam" id="3.30.200.20:FF:000166">
    <property type="entry name" value="Mitogen-activated protein kinase"/>
    <property type="match status" value="1"/>
</dbReference>
<dbReference type="Gene3D" id="3.30.200.20">
    <property type="entry name" value="Phosphorylase Kinase, domain 1"/>
    <property type="match status" value="1"/>
</dbReference>
<dbReference type="Gene3D" id="1.10.510.10">
    <property type="entry name" value="Transferase(Phosphotransferase) domain 1"/>
    <property type="match status" value="1"/>
</dbReference>
<dbReference type="InterPro" id="IPR011009">
    <property type="entry name" value="Kinase-like_dom_sf"/>
</dbReference>
<dbReference type="InterPro" id="IPR050117">
    <property type="entry name" value="MAP_kinase"/>
</dbReference>
<dbReference type="InterPro" id="IPR003527">
    <property type="entry name" value="MAP_kinase_CS"/>
</dbReference>
<dbReference type="InterPro" id="IPR000719">
    <property type="entry name" value="Prot_kinase_dom"/>
</dbReference>
<dbReference type="InterPro" id="IPR017441">
    <property type="entry name" value="Protein_kinase_ATP_BS"/>
</dbReference>
<dbReference type="PANTHER" id="PTHR24055">
    <property type="entry name" value="MITOGEN-ACTIVATED PROTEIN KINASE"/>
    <property type="match status" value="1"/>
</dbReference>
<dbReference type="Pfam" id="PF00069">
    <property type="entry name" value="Pkinase"/>
    <property type="match status" value="1"/>
</dbReference>
<dbReference type="SUPFAM" id="SSF56112">
    <property type="entry name" value="Protein kinase-like (PK-like)"/>
    <property type="match status" value="1"/>
</dbReference>
<dbReference type="PROSITE" id="PS01351">
    <property type="entry name" value="MAPK"/>
    <property type="match status" value="1"/>
</dbReference>
<dbReference type="PROSITE" id="PS00107">
    <property type="entry name" value="PROTEIN_KINASE_ATP"/>
    <property type="match status" value="1"/>
</dbReference>
<dbReference type="PROSITE" id="PS50011">
    <property type="entry name" value="PROTEIN_KINASE_DOM"/>
    <property type="match status" value="1"/>
</dbReference>